<proteinExistence type="evidence at protein level"/>
<keyword id="KW-0002">3D-structure</keyword>
<keyword id="KW-1064">Adaptive immunity</keyword>
<keyword id="KW-0025">Alternative splicing</keyword>
<keyword id="KW-1003">Cell membrane</keyword>
<keyword id="KW-0903">Direct protein sequencing</keyword>
<keyword id="KW-1015">Disulfide bond</keyword>
<keyword id="KW-0325">Glycoprotein</keyword>
<keyword id="KW-0391">Immunity</keyword>
<keyword id="KW-0393">Immunoglobulin domain</keyword>
<keyword id="KW-0399">Innate immunity</keyword>
<keyword id="KW-0472">Membrane</keyword>
<keyword id="KW-0597">Phosphoprotein</keyword>
<keyword id="KW-1267">Proteomics identification</keyword>
<keyword id="KW-0675">Receptor</keyword>
<keyword id="KW-1185">Reference proteome</keyword>
<keyword id="KW-0732">Signal</keyword>
<keyword id="KW-0812">Transmembrane</keyword>
<keyword id="KW-1133">Transmembrane helix</keyword>
<evidence type="ECO:0000250" key="1">
    <source>
        <dbReference type="UniProtKB" id="Q13291"/>
    </source>
</evidence>
<evidence type="ECO:0000250" key="2">
    <source>
        <dbReference type="UniProtKB" id="Q9ET39"/>
    </source>
</evidence>
<evidence type="ECO:0000255" key="3"/>
<evidence type="ECO:0000255" key="4">
    <source>
        <dbReference type="PROSITE-ProRule" id="PRU00114"/>
    </source>
</evidence>
<evidence type="ECO:0000269" key="5">
    <source>
    </source>
</evidence>
<evidence type="ECO:0000269" key="6">
    <source>
    </source>
</evidence>
<evidence type="ECO:0000269" key="7">
    <source>
    </source>
</evidence>
<evidence type="ECO:0000269" key="8">
    <source>
    </source>
</evidence>
<evidence type="ECO:0000269" key="9">
    <source>
    </source>
</evidence>
<evidence type="ECO:0000269" key="10">
    <source>
    </source>
</evidence>
<evidence type="ECO:0000269" key="11">
    <source>
    </source>
</evidence>
<evidence type="ECO:0000303" key="12">
    <source>
    </source>
</evidence>
<evidence type="ECO:0000303" key="13">
    <source>
    </source>
</evidence>
<evidence type="ECO:0000303" key="14">
    <source>
    </source>
</evidence>
<evidence type="ECO:0000305" key="15"/>
<evidence type="ECO:0007744" key="16">
    <source>
    </source>
</evidence>
<evidence type="ECO:0007829" key="17">
    <source>
        <dbReference type="PDB" id="2IF7"/>
    </source>
</evidence>
<accession>Q96DU3</accession>
<accession>A6NMW2</accession>
<accession>B2R8X8</accession>
<accession>Q14CF0</accession>
<accession>Q5TAS4</accession>
<accession>Q5TAS6</accession>
<accession>Q5TAT3</accession>
<accession>Q96DV0</accession>
<protein>
    <recommendedName>
        <fullName>SLAM family member 6</fullName>
    </recommendedName>
    <alternativeName>
        <fullName>Activating NK receptor</fullName>
    </alternativeName>
    <alternativeName>
        <fullName>NK-T-B-antigen</fullName>
        <shortName>NTB-A</shortName>
    </alternativeName>
    <cdAntigenName>CD352</cdAntigenName>
</protein>
<dbReference type="EMBL" id="AJ277141">
    <property type="protein sequence ID" value="CAC59749.1"/>
    <property type="molecule type" value="mRNA"/>
</dbReference>
<dbReference type="EMBL" id="AJ306388">
    <property type="protein sequence ID" value="CAC59750.1"/>
    <property type="molecule type" value="mRNA"/>
</dbReference>
<dbReference type="EMBL" id="AY358159">
    <property type="protein sequence ID" value="AAQ88526.1"/>
    <property type="molecule type" value="mRNA"/>
</dbReference>
<dbReference type="EMBL" id="AL832854">
    <property type="protein sequence ID" value="CAI46161.1"/>
    <property type="molecule type" value="mRNA"/>
</dbReference>
<dbReference type="EMBL" id="AK125624">
    <property type="protein sequence ID" value="BAG54223.1"/>
    <property type="molecule type" value="mRNA"/>
</dbReference>
<dbReference type="EMBL" id="AK301026">
    <property type="protein sequence ID" value="BAG62642.1"/>
    <property type="molecule type" value="mRNA"/>
</dbReference>
<dbReference type="EMBL" id="AK313549">
    <property type="protein sequence ID" value="BAG36325.1"/>
    <property type="molecule type" value="mRNA"/>
</dbReference>
<dbReference type="EMBL" id="AL138930">
    <property type="status" value="NOT_ANNOTATED_CDS"/>
    <property type="molecule type" value="Genomic_DNA"/>
</dbReference>
<dbReference type="EMBL" id="CH471121">
    <property type="protein sequence ID" value="EAW52713.1"/>
    <property type="molecule type" value="Genomic_DNA"/>
</dbReference>
<dbReference type="EMBL" id="CH471121">
    <property type="protein sequence ID" value="EAW52715.1"/>
    <property type="molecule type" value="Genomic_DNA"/>
</dbReference>
<dbReference type="EMBL" id="BC113893">
    <property type="protein sequence ID" value="AAI13894.1"/>
    <property type="molecule type" value="mRNA"/>
</dbReference>
<dbReference type="EMBL" id="BC114495">
    <property type="protein sequence ID" value="AAI14496.1"/>
    <property type="molecule type" value="mRNA"/>
</dbReference>
<dbReference type="CCDS" id="CCDS1205.1">
    <molecule id="Q96DU3-2"/>
</dbReference>
<dbReference type="CCDS" id="CCDS53393.1">
    <molecule id="Q96DU3-3"/>
</dbReference>
<dbReference type="CCDS" id="CCDS53394.1">
    <molecule id="Q96DU3-1"/>
</dbReference>
<dbReference type="RefSeq" id="NP_001171643.1">
    <molecule id="Q96DU3-1"/>
    <property type="nucleotide sequence ID" value="NM_001184714.2"/>
</dbReference>
<dbReference type="RefSeq" id="NP_001171644.1">
    <property type="nucleotide sequence ID" value="NM_001184715.1"/>
</dbReference>
<dbReference type="RefSeq" id="NP_001171645.1">
    <molecule id="Q96DU3-3"/>
    <property type="nucleotide sequence ID" value="NM_001184716.2"/>
</dbReference>
<dbReference type="RefSeq" id="NP_443163.1">
    <molecule id="Q96DU3-2"/>
    <property type="nucleotide sequence ID" value="NM_052931.5"/>
</dbReference>
<dbReference type="PDB" id="2IF7">
    <property type="method" value="X-ray"/>
    <property type="resolution" value="3.00 A"/>
    <property type="chains" value="A/B/C/D=24-215"/>
</dbReference>
<dbReference type="PDBsum" id="2IF7"/>
<dbReference type="SMR" id="Q96DU3"/>
<dbReference type="BioGRID" id="125378">
    <property type="interactions" value="15"/>
</dbReference>
<dbReference type="FunCoup" id="Q96DU3">
    <property type="interactions" value="464"/>
</dbReference>
<dbReference type="IntAct" id="Q96DU3">
    <property type="interactions" value="19"/>
</dbReference>
<dbReference type="MINT" id="Q96DU3"/>
<dbReference type="STRING" id="9606.ENSP00000357036"/>
<dbReference type="GlyCosmos" id="Q96DU3">
    <property type="glycosylation" value="8 sites, 1 glycan"/>
</dbReference>
<dbReference type="GlyGen" id="Q96DU3">
    <property type="glycosylation" value="8 sites, 1 O-linked glycan (1 site)"/>
</dbReference>
<dbReference type="iPTMnet" id="Q96DU3"/>
<dbReference type="PhosphoSitePlus" id="Q96DU3"/>
<dbReference type="BioMuta" id="SLAMF6"/>
<dbReference type="DMDM" id="205830927"/>
<dbReference type="MassIVE" id="Q96DU3"/>
<dbReference type="PaxDb" id="9606-ENSP00000357036"/>
<dbReference type="PeptideAtlas" id="Q96DU3"/>
<dbReference type="ProteomicsDB" id="76325">
    <molecule id="Q96DU3-1"/>
</dbReference>
<dbReference type="ProteomicsDB" id="76326">
    <molecule id="Q96DU3-2"/>
</dbReference>
<dbReference type="ProteomicsDB" id="76327">
    <molecule id="Q96DU3-3"/>
</dbReference>
<dbReference type="Antibodypedia" id="34279">
    <property type="antibodies" value="501 antibodies from 34 providers"/>
</dbReference>
<dbReference type="DNASU" id="114836"/>
<dbReference type="Ensembl" id="ENST00000368055.1">
    <molecule id="Q96DU3-3"/>
    <property type="protein sequence ID" value="ENSP00000357034.1"/>
    <property type="gene ID" value="ENSG00000162739.14"/>
</dbReference>
<dbReference type="Ensembl" id="ENST00000368057.8">
    <molecule id="Q96DU3-1"/>
    <property type="protein sequence ID" value="ENSP00000357036.3"/>
    <property type="gene ID" value="ENSG00000162739.14"/>
</dbReference>
<dbReference type="Ensembl" id="ENST00000368059.7">
    <molecule id="Q96DU3-2"/>
    <property type="protein sequence ID" value="ENSP00000357038.3"/>
    <property type="gene ID" value="ENSG00000162739.14"/>
</dbReference>
<dbReference type="GeneID" id="114836"/>
<dbReference type="KEGG" id="hsa:114836"/>
<dbReference type="MANE-Select" id="ENST00000368057.8">
    <property type="protein sequence ID" value="ENSP00000357036.3"/>
    <property type="RefSeq nucleotide sequence ID" value="NM_001184714.2"/>
    <property type="RefSeq protein sequence ID" value="NP_001171643.1"/>
</dbReference>
<dbReference type="UCSC" id="uc001fwd.2">
    <molecule id="Q96DU3-1"/>
    <property type="organism name" value="human"/>
</dbReference>
<dbReference type="AGR" id="HGNC:21392"/>
<dbReference type="CTD" id="114836"/>
<dbReference type="DisGeNET" id="114836"/>
<dbReference type="GeneCards" id="SLAMF6"/>
<dbReference type="HGNC" id="HGNC:21392">
    <property type="gene designation" value="SLAMF6"/>
</dbReference>
<dbReference type="HPA" id="ENSG00000162739">
    <property type="expression patterns" value="Tissue enriched (lymphoid)"/>
</dbReference>
<dbReference type="MIM" id="606446">
    <property type="type" value="gene"/>
</dbReference>
<dbReference type="neXtProt" id="NX_Q96DU3"/>
<dbReference type="OpenTargets" id="ENSG00000162739"/>
<dbReference type="PharmGKB" id="PA134959277"/>
<dbReference type="VEuPathDB" id="HostDB:ENSG00000162739"/>
<dbReference type="eggNOG" id="ENOG502SSRG">
    <property type="taxonomic scope" value="Eukaryota"/>
</dbReference>
<dbReference type="GeneTree" id="ENSGT01030000234540"/>
<dbReference type="HOGENOM" id="CLU_069386_2_0_1"/>
<dbReference type="InParanoid" id="Q96DU3"/>
<dbReference type="OMA" id="HVTHPKQ"/>
<dbReference type="OrthoDB" id="8963224at2759"/>
<dbReference type="PAN-GO" id="Q96DU3">
    <property type="GO annotations" value="4 GO annotations based on evolutionary models"/>
</dbReference>
<dbReference type="PhylomeDB" id="Q96DU3"/>
<dbReference type="TreeFam" id="TF334964"/>
<dbReference type="PathwayCommons" id="Q96DU3"/>
<dbReference type="Reactome" id="R-HSA-198933">
    <property type="pathway name" value="Immunoregulatory interactions between a Lymphoid and a non-Lymphoid cell"/>
</dbReference>
<dbReference type="SignaLink" id="Q96DU3"/>
<dbReference type="BioGRID-ORCS" id="114836">
    <property type="hits" value="15 hits in 1158 CRISPR screens"/>
</dbReference>
<dbReference type="EvolutionaryTrace" id="Q96DU3"/>
<dbReference type="GeneWiki" id="SLAMF6"/>
<dbReference type="GenomeRNAi" id="114836"/>
<dbReference type="Pharos" id="Q96DU3">
    <property type="development level" value="Tbio"/>
</dbReference>
<dbReference type="PRO" id="PR:Q96DU3"/>
<dbReference type="Proteomes" id="UP000005640">
    <property type="component" value="Chromosome 1"/>
</dbReference>
<dbReference type="RNAct" id="Q96DU3">
    <property type="molecule type" value="protein"/>
</dbReference>
<dbReference type="Bgee" id="ENSG00000162739">
    <property type="expression patterns" value="Expressed in granulocyte and 96 other cell types or tissues"/>
</dbReference>
<dbReference type="GO" id="GO:0009897">
    <property type="term" value="C:external side of plasma membrane"/>
    <property type="evidence" value="ECO:0000318"/>
    <property type="project" value="GO_Central"/>
</dbReference>
<dbReference type="GO" id="GO:0070062">
    <property type="term" value="C:extracellular exosome"/>
    <property type="evidence" value="ECO:0007005"/>
    <property type="project" value="UniProtKB"/>
</dbReference>
<dbReference type="GO" id="GO:0005886">
    <property type="term" value="C:plasma membrane"/>
    <property type="evidence" value="ECO:0000314"/>
    <property type="project" value="UniProtKB"/>
</dbReference>
<dbReference type="GO" id="GO:0006955">
    <property type="term" value="P:immune response"/>
    <property type="evidence" value="ECO:0000318"/>
    <property type="project" value="GO_Central"/>
</dbReference>
<dbReference type="GO" id="GO:0045087">
    <property type="term" value="P:innate immune response"/>
    <property type="evidence" value="ECO:0007669"/>
    <property type="project" value="UniProtKB-KW"/>
</dbReference>
<dbReference type="GO" id="GO:0032740">
    <property type="term" value="P:positive regulation of interleukin-17 production"/>
    <property type="evidence" value="ECO:0000314"/>
    <property type="project" value="UniProtKB"/>
</dbReference>
<dbReference type="GO" id="GO:0045954">
    <property type="term" value="P:positive regulation of natural killer cell mediated cytotoxicity"/>
    <property type="evidence" value="ECO:0000314"/>
    <property type="project" value="UniProtKB"/>
</dbReference>
<dbReference type="GO" id="GO:0032729">
    <property type="term" value="P:positive regulation of type II interferon production"/>
    <property type="evidence" value="ECO:0000315"/>
    <property type="project" value="UniProtKB"/>
</dbReference>
<dbReference type="GO" id="GO:0042110">
    <property type="term" value="P:T cell activation"/>
    <property type="evidence" value="ECO:0000318"/>
    <property type="project" value="GO_Central"/>
</dbReference>
<dbReference type="GO" id="GO:0072540">
    <property type="term" value="P:T-helper 17 cell lineage commitment"/>
    <property type="evidence" value="ECO:0000314"/>
    <property type="project" value="UniProtKB"/>
</dbReference>
<dbReference type="CDD" id="cd16842">
    <property type="entry name" value="Ig_SLAM-like_N"/>
    <property type="match status" value="1"/>
</dbReference>
<dbReference type="FunFam" id="2.60.40.10:FF:000470">
    <property type="entry name" value="SLAM family member 7"/>
    <property type="match status" value="1"/>
</dbReference>
<dbReference type="FunFam" id="2.60.40.10:FF:000820">
    <property type="entry name" value="SLAM family member 7"/>
    <property type="match status" value="1"/>
</dbReference>
<dbReference type="Gene3D" id="2.60.40.10">
    <property type="entry name" value="Immunoglobulins"/>
    <property type="match status" value="2"/>
</dbReference>
<dbReference type="InterPro" id="IPR015631">
    <property type="entry name" value="CD2/SLAM_rcpt"/>
</dbReference>
<dbReference type="InterPro" id="IPR007110">
    <property type="entry name" value="Ig-like_dom"/>
</dbReference>
<dbReference type="InterPro" id="IPR036179">
    <property type="entry name" value="Ig-like_dom_sf"/>
</dbReference>
<dbReference type="InterPro" id="IPR013783">
    <property type="entry name" value="Ig-like_fold"/>
</dbReference>
<dbReference type="InterPro" id="IPR003599">
    <property type="entry name" value="Ig_sub"/>
</dbReference>
<dbReference type="InterPro" id="IPR013106">
    <property type="entry name" value="Ig_V-set"/>
</dbReference>
<dbReference type="PANTHER" id="PTHR12080">
    <property type="entry name" value="SIGNALING LYMPHOCYTIC ACTIVATION MOLECULE"/>
    <property type="match status" value="1"/>
</dbReference>
<dbReference type="PANTHER" id="PTHR12080:SF16">
    <property type="entry name" value="SLAM FAMILY MEMBER 6"/>
    <property type="match status" value="1"/>
</dbReference>
<dbReference type="Pfam" id="PF07686">
    <property type="entry name" value="V-set"/>
    <property type="match status" value="1"/>
</dbReference>
<dbReference type="SMART" id="SM00409">
    <property type="entry name" value="IG"/>
    <property type="match status" value="1"/>
</dbReference>
<dbReference type="SUPFAM" id="SSF48726">
    <property type="entry name" value="Immunoglobulin"/>
    <property type="match status" value="2"/>
</dbReference>
<dbReference type="PROSITE" id="PS50835">
    <property type="entry name" value="IG_LIKE"/>
    <property type="match status" value="1"/>
</dbReference>
<name>SLAF6_HUMAN</name>
<reference key="1">
    <citation type="journal article" date="2001" name="J. Exp. Med.">
        <title>NTB-A, a novel SH2D1A-associated surface molecule contributing to the inability of natural killer cells to kill Epstein-Barr virus-infected B cells in X-linked Lymphoproliferative disease.</title>
        <authorList>
            <person name="Bottino C."/>
            <person name="Falco M."/>
            <person name="Parolini S."/>
            <person name="Marcenaro E."/>
            <person name="Augugliaro R."/>
            <person name="Sivori S."/>
            <person name="Landi E."/>
            <person name="Biassoni R."/>
            <person name="Notarangelo L.D."/>
            <person name="Moretta L."/>
            <person name="Moretta A."/>
        </authorList>
    </citation>
    <scope>NUCLEOTIDE SEQUENCE [MRNA] (ISOFORMS 1 AND 2)</scope>
    <scope>FUNCTION</scope>
    <scope>PHOSPHORYLATION</scope>
    <scope>TISSUE SPECIFICITY</scope>
    <scope>INTERACTION WITH SH2D1A; PTN6 AND PTN11</scope>
    <source>
        <tissue>Lymphoid tissue</tissue>
    </source>
</reference>
<reference key="2">
    <citation type="journal article" date="2001" name="J. Exp. Med.">
        <authorList>
            <person name="Bottino C."/>
            <person name="Falco M."/>
            <person name="Parolini S."/>
            <person name="Marcenaro E."/>
            <person name="Augugliaro R."/>
            <person name="Sivori S."/>
            <person name="Landi E."/>
            <person name="Biassoni R."/>
            <person name="Notarangelo L.D."/>
            <person name="Moretta L."/>
            <person name="Moretta A."/>
        </authorList>
    </citation>
    <scope>ERRATUM OF PUBMED:11489943</scope>
</reference>
<reference key="3">
    <citation type="journal article" date="2003" name="Genome Res.">
        <title>The secreted protein discovery initiative (SPDI), a large-scale effort to identify novel human secreted and transmembrane proteins: a bioinformatics assessment.</title>
        <authorList>
            <person name="Clark H.F."/>
            <person name="Gurney A.L."/>
            <person name="Abaya E."/>
            <person name="Baker K."/>
            <person name="Baldwin D.T."/>
            <person name="Brush J."/>
            <person name="Chen J."/>
            <person name="Chow B."/>
            <person name="Chui C."/>
            <person name="Crowley C."/>
            <person name="Currell B."/>
            <person name="Deuel B."/>
            <person name="Dowd P."/>
            <person name="Eaton D."/>
            <person name="Foster J.S."/>
            <person name="Grimaldi C."/>
            <person name="Gu Q."/>
            <person name="Hass P.E."/>
            <person name="Heldens S."/>
            <person name="Huang A."/>
            <person name="Kim H.S."/>
            <person name="Klimowski L."/>
            <person name="Jin Y."/>
            <person name="Johnson S."/>
            <person name="Lee J."/>
            <person name="Lewis L."/>
            <person name="Liao D."/>
            <person name="Mark M.R."/>
            <person name="Robbie E."/>
            <person name="Sanchez C."/>
            <person name="Schoenfeld J."/>
            <person name="Seshagiri S."/>
            <person name="Simmons L."/>
            <person name="Singh J."/>
            <person name="Smith V."/>
            <person name="Stinson J."/>
            <person name="Vagts A."/>
            <person name="Vandlen R.L."/>
            <person name="Watanabe C."/>
            <person name="Wieand D."/>
            <person name="Woods K."/>
            <person name="Xie M.-H."/>
            <person name="Yansura D.G."/>
            <person name="Yi S."/>
            <person name="Yu G."/>
            <person name="Yuan J."/>
            <person name="Zhang M."/>
            <person name="Zhang Z."/>
            <person name="Goddard A.D."/>
            <person name="Wood W.I."/>
            <person name="Godowski P.J."/>
            <person name="Gray A.M."/>
        </authorList>
    </citation>
    <scope>NUCLEOTIDE SEQUENCE [LARGE SCALE MRNA] (ISOFORM 1)</scope>
</reference>
<reference key="4">
    <citation type="journal article" date="2004" name="Nat. Genet.">
        <title>Complete sequencing and characterization of 21,243 full-length human cDNAs.</title>
        <authorList>
            <person name="Ota T."/>
            <person name="Suzuki Y."/>
            <person name="Nishikawa T."/>
            <person name="Otsuki T."/>
            <person name="Sugiyama T."/>
            <person name="Irie R."/>
            <person name="Wakamatsu A."/>
            <person name="Hayashi K."/>
            <person name="Sato H."/>
            <person name="Nagai K."/>
            <person name="Kimura K."/>
            <person name="Makita H."/>
            <person name="Sekine M."/>
            <person name="Obayashi M."/>
            <person name="Nishi T."/>
            <person name="Shibahara T."/>
            <person name="Tanaka T."/>
            <person name="Ishii S."/>
            <person name="Yamamoto J."/>
            <person name="Saito K."/>
            <person name="Kawai Y."/>
            <person name="Isono Y."/>
            <person name="Nakamura Y."/>
            <person name="Nagahari K."/>
            <person name="Murakami K."/>
            <person name="Yasuda T."/>
            <person name="Iwayanagi T."/>
            <person name="Wagatsuma M."/>
            <person name="Shiratori A."/>
            <person name="Sudo H."/>
            <person name="Hosoiri T."/>
            <person name="Kaku Y."/>
            <person name="Kodaira H."/>
            <person name="Kondo H."/>
            <person name="Sugawara M."/>
            <person name="Takahashi M."/>
            <person name="Kanda K."/>
            <person name="Yokoi T."/>
            <person name="Furuya T."/>
            <person name="Kikkawa E."/>
            <person name="Omura Y."/>
            <person name="Abe K."/>
            <person name="Kamihara K."/>
            <person name="Katsuta N."/>
            <person name="Sato K."/>
            <person name="Tanikawa M."/>
            <person name="Yamazaki M."/>
            <person name="Ninomiya K."/>
            <person name="Ishibashi T."/>
            <person name="Yamashita H."/>
            <person name="Murakawa K."/>
            <person name="Fujimori K."/>
            <person name="Tanai H."/>
            <person name="Kimata M."/>
            <person name="Watanabe M."/>
            <person name="Hiraoka S."/>
            <person name="Chiba Y."/>
            <person name="Ishida S."/>
            <person name="Ono Y."/>
            <person name="Takiguchi S."/>
            <person name="Watanabe S."/>
            <person name="Yosida M."/>
            <person name="Hotuta T."/>
            <person name="Kusano J."/>
            <person name="Kanehori K."/>
            <person name="Takahashi-Fujii A."/>
            <person name="Hara H."/>
            <person name="Tanase T.-O."/>
            <person name="Nomura Y."/>
            <person name="Togiya S."/>
            <person name="Komai F."/>
            <person name="Hara R."/>
            <person name="Takeuchi K."/>
            <person name="Arita M."/>
            <person name="Imose N."/>
            <person name="Musashino K."/>
            <person name="Yuuki H."/>
            <person name="Oshima A."/>
            <person name="Sasaki N."/>
            <person name="Aotsuka S."/>
            <person name="Yoshikawa Y."/>
            <person name="Matsunawa H."/>
            <person name="Ichihara T."/>
            <person name="Shiohata N."/>
            <person name="Sano S."/>
            <person name="Moriya S."/>
            <person name="Momiyama H."/>
            <person name="Satoh N."/>
            <person name="Takami S."/>
            <person name="Terashima Y."/>
            <person name="Suzuki O."/>
            <person name="Nakagawa S."/>
            <person name="Senoh A."/>
            <person name="Mizoguchi H."/>
            <person name="Goto Y."/>
            <person name="Shimizu F."/>
            <person name="Wakebe H."/>
            <person name="Hishigaki H."/>
            <person name="Watanabe T."/>
            <person name="Sugiyama A."/>
            <person name="Takemoto M."/>
            <person name="Kawakami B."/>
            <person name="Yamazaki M."/>
            <person name="Watanabe K."/>
            <person name="Kumagai A."/>
            <person name="Itakura S."/>
            <person name="Fukuzumi Y."/>
            <person name="Fujimori Y."/>
            <person name="Komiyama M."/>
            <person name="Tashiro H."/>
            <person name="Tanigami A."/>
            <person name="Fujiwara T."/>
            <person name="Ono T."/>
            <person name="Yamada K."/>
            <person name="Fujii Y."/>
            <person name="Ozaki K."/>
            <person name="Hirao M."/>
            <person name="Ohmori Y."/>
            <person name="Kawabata A."/>
            <person name="Hikiji T."/>
            <person name="Kobatake N."/>
            <person name="Inagaki H."/>
            <person name="Ikema Y."/>
            <person name="Okamoto S."/>
            <person name="Okitani R."/>
            <person name="Kawakami T."/>
            <person name="Noguchi S."/>
            <person name="Itoh T."/>
            <person name="Shigeta K."/>
            <person name="Senba T."/>
            <person name="Matsumura K."/>
            <person name="Nakajima Y."/>
            <person name="Mizuno T."/>
            <person name="Morinaga M."/>
            <person name="Sasaki M."/>
            <person name="Togashi T."/>
            <person name="Oyama M."/>
            <person name="Hata H."/>
            <person name="Watanabe M."/>
            <person name="Komatsu T."/>
            <person name="Mizushima-Sugano J."/>
            <person name="Satoh T."/>
            <person name="Shirai Y."/>
            <person name="Takahashi Y."/>
            <person name="Nakagawa K."/>
            <person name="Okumura K."/>
            <person name="Nagase T."/>
            <person name="Nomura N."/>
            <person name="Kikuchi H."/>
            <person name="Masuho Y."/>
            <person name="Yamashita R."/>
            <person name="Nakai K."/>
            <person name="Yada T."/>
            <person name="Nakamura Y."/>
            <person name="Ohara O."/>
            <person name="Isogai T."/>
            <person name="Sugano S."/>
        </authorList>
    </citation>
    <scope>NUCLEOTIDE SEQUENCE [LARGE SCALE MRNA] (ISOFORMS 2 AND 3)</scope>
    <source>
        <tissue>Spleen</tissue>
    </source>
</reference>
<reference key="5">
    <citation type="journal article" date="2007" name="BMC Genomics">
        <title>The full-ORF clone resource of the German cDNA consortium.</title>
        <authorList>
            <person name="Bechtel S."/>
            <person name="Rosenfelder H."/>
            <person name="Duda A."/>
            <person name="Schmidt C.P."/>
            <person name="Ernst U."/>
            <person name="Wellenreuther R."/>
            <person name="Mehrle A."/>
            <person name="Schuster C."/>
            <person name="Bahr A."/>
            <person name="Bloecker H."/>
            <person name="Heubner D."/>
            <person name="Hoerlein A."/>
            <person name="Michel G."/>
            <person name="Wedler H."/>
            <person name="Koehrer K."/>
            <person name="Ottenwaelder B."/>
            <person name="Poustka A."/>
            <person name="Wiemann S."/>
            <person name="Schupp I."/>
        </authorList>
    </citation>
    <scope>NUCLEOTIDE SEQUENCE [LARGE SCALE MRNA] (ISOFORM 1)</scope>
    <source>
        <tissue>Lymph node</tissue>
    </source>
</reference>
<reference key="6">
    <citation type="journal article" date="2006" name="Nature">
        <title>The DNA sequence and biological annotation of human chromosome 1.</title>
        <authorList>
            <person name="Gregory S.G."/>
            <person name="Barlow K.F."/>
            <person name="McLay K.E."/>
            <person name="Kaul R."/>
            <person name="Swarbreck D."/>
            <person name="Dunham A."/>
            <person name="Scott C.E."/>
            <person name="Howe K.L."/>
            <person name="Woodfine K."/>
            <person name="Spencer C.C.A."/>
            <person name="Jones M.C."/>
            <person name="Gillson C."/>
            <person name="Searle S."/>
            <person name="Zhou Y."/>
            <person name="Kokocinski F."/>
            <person name="McDonald L."/>
            <person name="Evans R."/>
            <person name="Phillips K."/>
            <person name="Atkinson A."/>
            <person name="Cooper R."/>
            <person name="Jones C."/>
            <person name="Hall R.E."/>
            <person name="Andrews T.D."/>
            <person name="Lloyd C."/>
            <person name="Ainscough R."/>
            <person name="Almeida J.P."/>
            <person name="Ambrose K.D."/>
            <person name="Anderson F."/>
            <person name="Andrew R.W."/>
            <person name="Ashwell R.I.S."/>
            <person name="Aubin K."/>
            <person name="Babbage A.K."/>
            <person name="Bagguley C.L."/>
            <person name="Bailey J."/>
            <person name="Beasley H."/>
            <person name="Bethel G."/>
            <person name="Bird C.P."/>
            <person name="Bray-Allen S."/>
            <person name="Brown J.Y."/>
            <person name="Brown A.J."/>
            <person name="Buckley D."/>
            <person name="Burton J."/>
            <person name="Bye J."/>
            <person name="Carder C."/>
            <person name="Chapman J.C."/>
            <person name="Clark S.Y."/>
            <person name="Clarke G."/>
            <person name="Clee C."/>
            <person name="Cobley V."/>
            <person name="Collier R.E."/>
            <person name="Corby N."/>
            <person name="Coville G.J."/>
            <person name="Davies J."/>
            <person name="Deadman R."/>
            <person name="Dunn M."/>
            <person name="Earthrowl M."/>
            <person name="Ellington A.G."/>
            <person name="Errington H."/>
            <person name="Frankish A."/>
            <person name="Frankland J."/>
            <person name="French L."/>
            <person name="Garner P."/>
            <person name="Garnett J."/>
            <person name="Gay L."/>
            <person name="Ghori M.R.J."/>
            <person name="Gibson R."/>
            <person name="Gilby L.M."/>
            <person name="Gillett W."/>
            <person name="Glithero R.J."/>
            <person name="Grafham D.V."/>
            <person name="Griffiths C."/>
            <person name="Griffiths-Jones S."/>
            <person name="Grocock R."/>
            <person name="Hammond S."/>
            <person name="Harrison E.S.I."/>
            <person name="Hart E."/>
            <person name="Haugen E."/>
            <person name="Heath P.D."/>
            <person name="Holmes S."/>
            <person name="Holt K."/>
            <person name="Howden P.J."/>
            <person name="Hunt A.R."/>
            <person name="Hunt S.E."/>
            <person name="Hunter G."/>
            <person name="Isherwood J."/>
            <person name="James R."/>
            <person name="Johnson C."/>
            <person name="Johnson D."/>
            <person name="Joy A."/>
            <person name="Kay M."/>
            <person name="Kershaw J.K."/>
            <person name="Kibukawa M."/>
            <person name="Kimberley A.M."/>
            <person name="King A."/>
            <person name="Knights A.J."/>
            <person name="Lad H."/>
            <person name="Laird G."/>
            <person name="Lawlor S."/>
            <person name="Leongamornlert D.A."/>
            <person name="Lloyd D.M."/>
            <person name="Loveland J."/>
            <person name="Lovell J."/>
            <person name="Lush M.J."/>
            <person name="Lyne R."/>
            <person name="Martin S."/>
            <person name="Mashreghi-Mohammadi M."/>
            <person name="Matthews L."/>
            <person name="Matthews N.S.W."/>
            <person name="McLaren S."/>
            <person name="Milne S."/>
            <person name="Mistry S."/>
            <person name="Moore M.J.F."/>
            <person name="Nickerson T."/>
            <person name="O'Dell C.N."/>
            <person name="Oliver K."/>
            <person name="Palmeiri A."/>
            <person name="Palmer S.A."/>
            <person name="Parker A."/>
            <person name="Patel D."/>
            <person name="Pearce A.V."/>
            <person name="Peck A.I."/>
            <person name="Pelan S."/>
            <person name="Phelps K."/>
            <person name="Phillimore B.J."/>
            <person name="Plumb R."/>
            <person name="Rajan J."/>
            <person name="Raymond C."/>
            <person name="Rouse G."/>
            <person name="Saenphimmachak C."/>
            <person name="Sehra H.K."/>
            <person name="Sheridan E."/>
            <person name="Shownkeen R."/>
            <person name="Sims S."/>
            <person name="Skuce C.D."/>
            <person name="Smith M."/>
            <person name="Steward C."/>
            <person name="Subramanian S."/>
            <person name="Sycamore N."/>
            <person name="Tracey A."/>
            <person name="Tromans A."/>
            <person name="Van Helmond Z."/>
            <person name="Wall M."/>
            <person name="Wallis J.M."/>
            <person name="White S."/>
            <person name="Whitehead S.L."/>
            <person name="Wilkinson J.E."/>
            <person name="Willey D.L."/>
            <person name="Williams H."/>
            <person name="Wilming L."/>
            <person name="Wray P.W."/>
            <person name="Wu Z."/>
            <person name="Coulson A."/>
            <person name="Vaudin M."/>
            <person name="Sulston J.E."/>
            <person name="Durbin R.M."/>
            <person name="Hubbard T."/>
            <person name="Wooster R."/>
            <person name="Dunham I."/>
            <person name="Carter N.P."/>
            <person name="McVean G."/>
            <person name="Ross M.T."/>
            <person name="Harrow J."/>
            <person name="Olson M.V."/>
            <person name="Beck S."/>
            <person name="Rogers J."/>
            <person name="Bentley D.R."/>
        </authorList>
    </citation>
    <scope>NUCLEOTIDE SEQUENCE [LARGE SCALE GENOMIC DNA]</scope>
</reference>
<reference key="7">
    <citation type="submission" date="2005-09" db="EMBL/GenBank/DDBJ databases">
        <authorList>
            <person name="Mural R.J."/>
            <person name="Istrail S."/>
            <person name="Sutton G.G."/>
            <person name="Florea L."/>
            <person name="Halpern A.L."/>
            <person name="Mobarry C.M."/>
            <person name="Lippert R."/>
            <person name="Walenz B."/>
            <person name="Shatkay H."/>
            <person name="Dew I."/>
            <person name="Miller J.R."/>
            <person name="Flanigan M.J."/>
            <person name="Edwards N.J."/>
            <person name="Bolanos R."/>
            <person name="Fasulo D."/>
            <person name="Halldorsson B.V."/>
            <person name="Hannenhalli S."/>
            <person name="Turner R."/>
            <person name="Yooseph S."/>
            <person name="Lu F."/>
            <person name="Nusskern D.R."/>
            <person name="Shue B.C."/>
            <person name="Zheng X.H."/>
            <person name="Zhong F."/>
            <person name="Delcher A.L."/>
            <person name="Huson D.H."/>
            <person name="Kravitz S.A."/>
            <person name="Mouchard L."/>
            <person name="Reinert K."/>
            <person name="Remington K.A."/>
            <person name="Clark A.G."/>
            <person name="Waterman M.S."/>
            <person name="Eichler E.E."/>
            <person name="Adams M.D."/>
            <person name="Hunkapiller M.W."/>
            <person name="Myers E.W."/>
            <person name="Venter J.C."/>
        </authorList>
    </citation>
    <scope>NUCLEOTIDE SEQUENCE [LARGE SCALE GENOMIC DNA]</scope>
</reference>
<reference key="8">
    <citation type="journal article" date="2004" name="Genome Res.">
        <title>The status, quality, and expansion of the NIH full-length cDNA project: the Mammalian Gene Collection (MGC).</title>
        <authorList>
            <consortium name="The MGC Project Team"/>
        </authorList>
    </citation>
    <scope>NUCLEOTIDE SEQUENCE [LARGE SCALE MRNA] (ISOFORMS 1 AND 2)</scope>
</reference>
<reference key="9">
    <citation type="journal article" date="2004" name="Protein Sci.">
        <title>Signal peptide prediction based on analysis of experimentally verified cleavage sites.</title>
        <authorList>
            <person name="Zhang Z."/>
            <person name="Henzel W.J."/>
        </authorList>
    </citation>
    <scope>PROTEIN SEQUENCE OF 22-36</scope>
</reference>
<reference key="10">
    <citation type="journal article" date="2006" name="J. Immunol.">
        <title>Molecular analysis of NTB-A signaling: a role for EAT-2 in NTB-A-mediated activation of human NK cells.</title>
        <authorList>
            <person name="Eissmann P."/>
            <person name="Watzl C."/>
        </authorList>
    </citation>
    <scope>FUNCTION</scope>
    <scope>PHOSPHORYLATION</scope>
    <scope>INTERACTION WITH SH2D1A AND SH2D1B</scope>
    <scope>MUTAGENESIS OF TYR-274; TYR-285 AND TYR-309</scope>
</reference>
<reference key="11">
    <citation type="journal article" date="2009" name="Nat. Biotechnol.">
        <title>Mass-spectrometric identification and relative quantification of N-linked cell surface glycoproteins.</title>
        <authorList>
            <person name="Wollscheid B."/>
            <person name="Bausch-Fluck D."/>
            <person name="Henderson C."/>
            <person name="O'Brien R."/>
            <person name="Bibel M."/>
            <person name="Schiess R."/>
            <person name="Aebersold R."/>
            <person name="Watts J.D."/>
        </authorList>
    </citation>
    <scope>GLYCOSYLATION [LARGE SCALE ANALYSIS] AT ASN-178</scope>
    <source>
        <tissue>Leukemic T-cell</tissue>
    </source>
</reference>
<reference key="12">
    <citation type="journal article" date="2009" name="Sci. Signal.">
        <title>Quantitative phosphoproteomic analysis of T cell receptor signaling reveals system-wide modulation of protein-protein interactions.</title>
        <authorList>
            <person name="Mayya V."/>
            <person name="Lundgren D.H."/>
            <person name="Hwang S.-I."/>
            <person name="Rezaul K."/>
            <person name="Wu L."/>
            <person name="Eng J.K."/>
            <person name="Rodionov V."/>
            <person name="Han D.K."/>
        </authorList>
    </citation>
    <scope>PHOSPHORYLATION [LARGE SCALE ANALYSIS] AT TYR-274; SER-278 AND TYR-309</scope>
    <scope>IDENTIFICATION BY MASS SPECTROMETRY [LARGE SCALE ANALYSIS]</scope>
    <source>
        <tissue>Leukemic T-cell</tissue>
    </source>
</reference>
<reference key="13">
    <citation type="journal article" date="2012" name="J. Biol. Chem.">
        <title>CD3-T cell receptor co-stimulation through SLAMF3 and SLAMF6 receptors enhances RORgammat recruitment to the IL17A promoter in human T lymphocytes.</title>
        <authorList>
            <person name="Chatterjee M."/>
            <person name="Hedrich C.M."/>
            <person name="Rauen T."/>
            <person name="Ioannidis C."/>
            <person name="Terhorst C."/>
            <person name="Tsokos G.C."/>
        </authorList>
    </citation>
    <scope>FUNCTION</scope>
</reference>
<reference key="14">
    <citation type="journal article" date="2012" name="J. Immunol.">
        <title>Increased expression of SLAM receptors SLAMF3 and SLAMF6 in systemic lupus erythematosus T lymphocytes promotes Th17 differentiation.</title>
        <authorList>
            <person name="Chatterjee M."/>
            <person name="Rauen T."/>
            <person name="Kis-Toth K."/>
            <person name="Kyttaris V.C."/>
            <person name="Hedrich C.M."/>
            <person name="Terhorst C."/>
            <person name="Tsokos G.C."/>
        </authorList>
    </citation>
    <scope>FUNCTION</scope>
    <scope>TISSUE SPECIFICITY</scope>
</reference>
<reference key="15">
    <citation type="journal article" date="2006" name="Immunity">
        <title>NTB-A receptor crystal structure: insights into homophilic interactions in the signaling lymphocytic activation molecule receptor family.</title>
        <authorList>
            <person name="Cao E."/>
            <person name="Ramagopal U.A."/>
            <person name="Fedorov A."/>
            <person name="Fedorov E."/>
            <person name="Yan Q."/>
            <person name="Lary J.W."/>
            <person name="Cole J.L."/>
            <person name="Nathenson S.G."/>
            <person name="Almo S.C."/>
        </authorList>
    </citation>
    <scope>X-RAY CRYSTALLOGRAPHY (3.0 ANGSTROMS) OF 24-215</scope>
    <scope>SUBUNIT</scope>
    <scope>DISULFIDE BONDS</scope>
    <scope>MUTAGENESIS OF ARG-108; GLN-110 AND SER-112</scope>
</reference>
<sequence length="332" mass="37345">MLWLFQSLLFVFCFGPGNVVSQSSLTPLMVNGILGESVTLPLEFPAGEKVNFITWLFNETSLAFIVPHETKSPEIHVTNPKQGKRLNFTQSYSLQLSNLKMEDTGSYRAQISTKTSAKLSSYTLRILRQLRNIQVTNHSQLFQNMTCELHLTCSVEDADDNVSFRWEALGNTLSSQPNLTVSWDPRISSEQDYTCIAENAVSNLSFSVSAQKLCEDVKIQYTDTKMILFMVSGICIVFGFIILLLLVLRKRRDSLSLSTQRTQGPAESARNLEYVSVSPTNNTVYASVTHSNRETEIWTPRENDTITIYSTINHSKESKPTFSRATALDNVV</sequence>
<organism>
    <name type="scientific">Homo sapiens</name>
    <name type="common">Human</name>
    <dbReference type="NCBI Taxonomy" id="9606"/>
    <lineage>
        <taxon>Eukaryota</taxon>
        <taxon>Metazoa</taxon>
        <taxon>Chordata</taxon>
        <taxon>Craniata</taxon>
        <taxon>Vertebrata</taxon>
        <taxon>Euteleostomi</taxon>
        <taxon>Mammalia</taxon>
        <taxon>Eutheria</taxon>
        <taxon>Euarchontoglires</taxon>
        <taxon>Primates</taxon>
        <taxon>Haplorrhini</taxon>
        <taxon>Catarrhini</taxon>
        <taxon>Hominidae</taxon>
        <taxon>Homo</taxon>
    </lineage>
</organism>
<gene>
    <name type="primary">SLAMF6</name>
    <name type="synonym">KALI</name>
    <name type="ORF">UNQ6123/PRO20080</name>
</gene>
<comment type="function">
    <text evidence="2 5 7 10 11">Self-ligand receptor of the signaling lymphocytic activation molecule (SLAM) family. SLAM receptors triggered by homo- or heterotypic cell-cell interactions are modulating the activation and differentiation of a wide variety of immune cells and thus are involved in the regulation and interconnection of both innate and adaptive immune response. Activities are controlled by presence or absence of small cytoplasmic adapter proteins, SH2D1A/SAP and/or SH2D1B/EAT-2. Triggers cytolytic activity only in natural killer cells (NK) expressing high surface densities of natural cytotoxicity receptors (PubMed:11489943, PubMed:16920955). Positive signaling in NK cells implicates phosphorylation of VAV1. NK cell activation seems to depend on SH2D1B and not on SH2D1A (PubMed:16920955). In conjunction with SLAMF1 controls the transition between positive selection and the subsequent expansion and differentiation of the thymocytic natural killer T (NKT) cell lineage (By similarity). Promotes T-cell differentiation into a helper T-cell Th17 phenotype leading to increased IL-17 secretion; the costimulatory activity requires SH2D1A (PubMed:16920955, PubMed:22184727). Promotes recruitment of RORC to the IL-17 promoter (PubMed:22989874). In conjunction with SLAMF1 and CD84/SLAMF5 may be a negative regulator of the humoral immune response. In the absence of SH2D1A/SAP can transmit negative signals to CD4(+) T-cells and NKT cells. Negatively regulates germinal center formation by inhibiting T-cell:B-cell adhesion; the function probably implicates increased association with PTPN6/SHP-1 via ITSMs in absence of SH2D1A/SAP. However, reported to be involved in maintaining B-cell tolerance in germinal centers and in preventing autoimmunity (By similarity).</text>
</comment>
<comment type="subunit">
    <text evidence="5 7 8">Homodimer. Interacts with PTN6. Interacts (phosphorylated) with PTN11. Interacts (phosphorylated on tyrosine residues) with SH2D1A/SAP and SH2D1B/EAT2; SH2D1A and SH2D1B can associate with the same SLAMF6 molecule; interaction with SH2D1B is mediated by ITSM 2.</text>
</comment>
<comment type="interaction">
    <interactant intactId="EBI-14058448">
        <id>Q96DU3</id>
    </interactant>
    <interactant intactId="EBI-12244618">
        <id>Q6PL45-2</id>
        <label>BRICD5</label>
    </interactant>
    <organismsDiffer>false</organismsDiffer>
    <experiments>3</experiments>
</comment>
<comment type="interaction">
    <interactant intactId="EBI-14058448">
        <id>Q96DU3</id>
    </interactant>
    <interactant intactId="EBI-12256978">
        <id>Q8N6F1-2</id>
        <label>CLDN19</label>
    </interactant>
    <organismsDiffer>false</organismsDiffer>
    <experiments>3</experiments>
</comment>
<comment type="interaction">
    <interactant intactId="EBI-14058448">
        <id>Q96DU3</id>
    </interactant>
    <interactant intactId="EBI-10266796">
        <id>Q8N5M9</id>
        <label>JAGN1</label>
    </interactant>
    <organismsDiffer>false</organismsDiffer>
    <experiments>3</experiments>
</comment>
<comment type="interaction">
    <interactant intactId="EBI-14058448">
        <id>Q96DU3</id>
    </interactant>
    <interactant intactId="EBI-712367">
        <id>Q9UI14</id>
        <label>RABAC1</label>
    </interactant>
    <organismsDiffer>false</organismsDiffer>
    <experiments>3</experiments>
</comment>
<comment type="interaction">
    <interactant intactId="EBI-14058448">
        <id>Q96DU3</id>
    </interactant>
    <interactant intactId="EBI-6983382">
        <id>O60880</id>
        <label>SH2D1A</label>
    </interactant>
    <organismsDiffer>false</organismsDiffer>
    <experiments>12</experiments>
</comment>
<comment type="interaction">
    <interactant intactId="EBI-14058448">
        <id>Q96DU3</id>
    </interactant>
    <interactant intactId="EBI-3923013">
        <id>O14796</id>
        <label>SH2D1B</label>
    </interactant>
    <organismsDiffer>false</organismsDiffer>
    <experiments>4</experiments>
</comment>
<comment type="interaction">
    <interactant intactId="EBI-14058448">
        <id>Q96DU3</id>
    </interactant>
    <interactant intactId="EBI-1045825">
        <id>P55061</id>
        <label>TMBIM6</label>
    </interactant>
    <organismsDiffer>false</organismsDiffer>
    <experiments>3</experiments>
</comment>
<comment type="interaction">
    <interactant intactId="EBI-14058448">
        <id>Q96DU3</id>
    </interactant>
    <interactant intactId="EBI-11724433">
        <id>Q6ZT21</id>
        <label>TMPPE</label>
    </interactant>
    <organismsDiffer>false</organismsDiffer>
    <experiments>3</experiments>
</comment>
<comment type="subcellular location">
    <subcellularLocation>
        <location evidence="15">Cell membrane</location>
        <topology evidence="15">Single-pass type I membrane protein</topology>
    </subcellularLocation>
</comment>
<comment type="alternative products">
    <event type="alternative splicing"/>
    <isoform>
        <id>Q96DU3-1</id>
        <name>1</name>
        <sequence type="displayed"/>
    </isoform>
    <isoform>
        <id>Q96DU3-2</id>
        <name>2</name>
        <sequence type="described" ref="VSP_034620"/>
    </isoform>
    <isoform>
        <id>Q96DU3-3</id>
        <name>3</name>
        <sequence type="described" ref="VSP_043230"/>
    </isoform>
</comment>
<comment type="tissue specificity">
    <text evidence="5 10">Expressed by all (resting and activated) natural killer cells (NK), T- and B-lymphocytes (PubMed:11489943). Increased surface expression on T-cells of systemic lupus erythematosus (SLE) patients (PubMed:22184727).</text>
</comment>
<comment type="domain">
    <text evidence="1">The ITSMs (immunoreceptor tyrosine-based switch motifs) with the consensus sequence T-X-Y-X-X-[VI] present in SLAM family receptors have overlapping specificity for activating and inhibitory SH2 domain-containingbinding partners. Especially they mediate the with the SH2 domain of SH2D1A and SH2D1B. A 'two-out-of-three-pronged' mechanism is proposed involving threonine (position -2), phosphorylated tyrosine (position 0) and valine/isoleucine (position +3).</text>
</comment>
<comment type="PTM">
    <text evidence="7">Phosphorylation in NK cells upon engagment by SLAMF6-expressing target cells is leading to receptor activation.</text>
</comment>
<feature type="signal peptide" evidence="6">
    <location>
        <begin position="1"/>
        <end position="21"/>
    </location>
</feature>
<feature type="chain" id="PRO_0000014961" description="SLAM family member 6">
    <location>
        <begin position="22"/>
        <end position="332"/>
    </location>
</feature>
<feature type="topological domain" description="Extracellular" evidence="3">
    <location>
        <begin position="22"/>
        <end position="226"/>
    </location>
</feature>
<feature type="transmembrane region" description="Helical" evidence="3">
    <location>
        <begin position="227"/>
        <end position="247"/>
    </location>
</feature>
<feature type="topological domain" description="Cytoplasmic" evidence="3">
    <location>
        <begin position="248"/>
        <end position="331"/>
    </location>
</feature>
<feature type="domain" description="Ig-like V-type">
    <location>
        <begin position="35"/>
        <end position="120"/>
    </location>
</feature>
<feature type="domain" description="Ig-like C2-type">
    <location>
        <begin position="132"/>
        <end position="209"/>
    </location>
</feature>
<feature type="short sequence motif" description="ITSM 1" evidence="1">
    <location>
        <begin position="283"/>
        <end position="288"/>
    </location>
</feature>
<feature type="short sequence motif" description="ITSM 2" evidence="1">
    <location>
        <begin position="307"/>
        <end position="312"/>
    </location>
</feature>
<feature type="modified residue" description="Phosphotyrosine" evidence="16">
    <location>
        <position position="274"/>
    </location>
</feature>
<feature type="modified residue" description="Phosphoserine" evidence="16">
    <location>
        <position position="278"/>
    </location>
</feature>
<feature type="modified residue" description="Phosphotyrosine" evidence="16">
    <location>
        <position position="309"/>
    </location>
</feature>
<feature type="glycosylation site" description="N-linked (GlcNAc...) asparagine" evidence="3">
    <location>
        <position position="58"/>
    </location>
</feature>
<feature type="glycosylation site" description="N-linked (GlcNAc...) asparagine" evidence="3">
    <location>
        <position position="87"/>
    </location>
</feature>
<feature type="glycosylation site" description="N-linked (GlcNAc...) asparagine" evidence="3">
    <location>
        <position position="137"/>
    </location>
</feature>
<feature type="glycosylation site" description="N-linked (GlcNAc...) asparagine" evidence="3">
    <location>
        <position position="144"/>
    </location>
</feature>
<feature type="glycosylation site" description="N-linked (GlcNAc...) asparagine" evidence="3">
    <location>
        <position position="161"/>
    </location>
</feature>
<feature type="glycosylation site" description="N-linked (GlcNAc...) asparagine" evidence="9">
    <location>
        <position position="178"/>
    </location>
</feature>
<feature type="glycosylation site" description="N-linked (GlcNAc...) asparagine" evidence="3">
    <location>
        <position position="203"/>
    </location>
</feature>
<feature type="disulfide bond" evidence="4 8">
    <location>
        <begin position="147"/>
        <end position="214"/>
    </location>
</feature>
<feature type="disulfide bond" evidence="4 8">
    <location>
        <begin position="153"/>
        <end position="195"/>
    </location>
</feature>
<feature type="splice variant" id="VSP_043230" description="In isoform 3." evidence="13">
    <location>
        <begin position="18"/>
        <end position="128"/>
    </location>
</feature>
<feature type="splice variant" id="VSP_034620" description="In isoform 2." evidence="12 13 14">
    <location>
        <position position="266"/>
    </location>
</feature>
<feature type="mutagenesis site" description="Inhibits dimerization." evidence="8">
    <original>R</original>
    <variation>A</variation>
    <location>
        <position position="108"/>
    </location>
</feature>
<feature type="mutagenesis site" description="Inhibits dimerization." evidence="8">
    <original>Q</original>
    <variation>A</variation>
    <location>
        <position position="110"/>
    </location>
</feature>
<feature type="mutagenesis site" description="Inhibits dimerization." evidence="8">
    <original>S</original>
    <variation>A</variation>
    <location>
        <position position="112"/>
    </location>
</feature>
<feature type="mutagenesis site" description="Retains reduced SLAMF6-mediated cytotoxicity, disrupts interaction with SH2D1A and retains interaction with SH2D1B; when associated with F-309." evidence="7">
    <original>Y</original>
    <variation>F</variation>
    <location>
        <position position="274"/>
    </location>
</feature>
<feature type="mutagenesis site" description="Abolishes SLAMF6-mediated cytotoxicity, disrupts interaction with SH2D1B and retains interaction with SH2D1A." evidence="7">
    <original>Y</original>
    <variation>F</variation>
    <location>
        <position position="285"/>
    </location>
</feature>
<feature type="mutagenesis site" description="Reduced SLAMF6-mediated cytotoxicity." evidence="7">
    <original>Y</original>
    <variation>F</variation>
    <location>
        <position position="309"/>
    </location>
</feature>
<feature type="mutagenesis site" description="Retains reduced SLAMF6-mediated cytotoxicity, disrupts interaction with SH2D1A and retains interaction with SH2D1B; when associated with F-273." evidence="7">
    <original>Y</original>
    <variation>F</variation>
    <location>
        <position position="309"/>
    </location>
</feature>
<feature type="strand" evidence="17">
    <location>
        <begin position="28"/>
        <end position="33"/>
    </location>
</feature>
<feature type="strand" evidence="17">
    <location>
        <begin position="38"/>
        <end position="40"/>
    </location>
</feature>
<feature type="strand" evidence="17">
    <location>
        <begin position="52"/>
        <end position="57"/>
    </location>
</feature>
<feature type="strand" evidence="17">
    <location>
        <begin position="60"/>
        <end position="66"/>
    </location>
</feature>
<feature type="strand" evidence="17">
    <location>
        <begin position="69"/>
        <end position="71"/>
    </location>
</feature>
<feature type="strand" evidence="17">
    <location>
        <begin position="74"/>
        <end position="77"/>
    </location>
</feature>
<feature type="helix" evidence="17">
    <location>
        <begin position="80"/>
        <end position="83"/>
    </location>
</feature>
<feature type="strand" evidence="17">
    <location>
        <begin position="86"/>
        <end position="88"/>
    </location>
</feature>
<feature type="strand" evidence="17">
    <location>
        <begin position="94"/>
        <end position="96"/>
    </location>
</feature>
<feature type="helix" evidence="17">
    <location>
        <begin position="101"/>
        <end position="103"/>
    </location>
</feature>
<feature type="strand" evidence="17">
    <location>
        <begin position="105"/>
        <end position="112"/>
    </location>
</feature>
<feature type="strand" evidence="17">
    <location>
        <begin position="117"/>
        <end position="127"/>
    </location>
</feature>
<feature type="strand" evidence="17">
    <location>
        <begin position="131"/>
        <end position="137"/>
    </location>
</feature>
<feature type="strand" evidence="17">
    <location>
        <begin position="145"/>
        <end position="157"/>
    </location>
</feature>
<feature type="strand" evidence="17">
    <location>
        <begin position="163"/>
        <end position="168"/>
    </location>
</feature>
<feature type="strand" evidence="17">
    <location>
        <begin position="171"/>
        <end position="183"/>
    </location>
</feature>
<feature type="turn" evidence="17">
    <location>
        <begin position="185"/>
        <end position="187"/>
    </location>
</feature>
<feature type="strand" evidence="17">
    <location>
        <begin position="192"/>
        <end position="199"/>
    </location>
</feature>
<feature type="strand" evidence="17">
    <location>
        <begin position="202"/>
        <end position="209"/>
    </location>
</feature>
<feature type="helix" evidence="17">
    <location>
        <begin position="210"/>
        <end position="213"/>
    </location>
</feature>